<reference key="1">
    <citation type="journal article" date="2006" name="J. Bacteriol.">
        <title>Genome sequence of Aeromonas hydrophila ATCC 7966T: jack of all trades.</title>
        <authorList>
            <person name="Seshadri R."/>
            <person name="Joseph S.W."/>
            <person name="Chopra A.K."/>
            <person name="Sha J."/>
            <person name="Shaw J."/>
            <person name="Graf J."/>
            <person name="Haft D.H."/>
            <person name="Wu M."/>
            <person name="Ren Q."/>
            <person name="Rosovitz M.J."/>
            <person name="Madupu R."/>
            <person name="Tallon L."/>
            <person name="Kim M."/>
            <person name="Jin S."/>
            <person name="Vuong H."/>
            <person name="Stine O.C."/>
            <person name="Ali A."/>
            <person name="Horneman A.J."/>
            <person name="Heidelberg J.F."/>
        </authorList>
    </citation>
    <scope>NUCLEOTIDE SEQUENCE [LARGE SCALE GENOMIC DNA]</scope>
    <source>
        <strain>ATCC 7966 / DSM 30187 / BCRC 13018 / CCUG 14551 / JCM 1027 / KCTC 2358 / NCIMB 9240 / NCTC 8049</strain>
    </source>
</reference>
<feature type="chain" id="PRO_0000368299" description="ATP synthase subunit b">
    <location>
        <begin position="1"/>
        <end position="156"/>
    </location>
</feature>
<feature type="transmembrane region" description="Helical" evidence="1">
    <location>
        <begin position="11"/>
        <end position="31"/>
    </location>
</feature>
<sequence length="156" mass="17031">MNINATLLGQAIAFFIFVVFCMKYVWPPLMAAIEARQKAIADGLSSAERAKKDLDLAKANATDQLKEAKLQAAEIIEQANKRKAQIIDEAAAGAHSEREKILAQGRAEIEAERHRAKEELRKQVAALAIAGAEKILARQIDQAANSDIVDKLVAEL</sequence>
<name>ATPF_AERHH</name>
<keyword id="KW-0066">ATP synthesis</keyword>
<keyword id="KW-0997">Cell inner membrane</keyword>
<keyword id="KW-1003">Cell membrane</keyword>
<keyword id="KW-0138">CF(0)</keyword>
<keyword id="KW-0375">Hydrogen ion transport</keyword>
<keyword id="KW-0406">Ion transport</keyword>
<keyword id="KW-0472">Membrane</keyword>
<keyword id="KW-1185">Reference proteome</keyword>
<keyword id="KW-0812">Transmembrane</keyword>
<keyword id="KW-1133">Transmembrane helix</keyword>
<keyword id="KW-0813">Transport</keyword>
<accession>A0KQY2</accession>
<dbReference type="EMBL" id="CP000462">
    <property type="protein sequence ID" value="ABK36891.1"/>
    <property type="molecule type" value="Genomic_DNA"/>
</dbReference>
<dbReference type="RefSeq" id="WP_011707912.1">
    <property type="nucleotide sequence ID" value="NC_008570.1"/>
</dbReference>
<dbReference type="RefSeq" id="YP_858683.1">
    <property type="nucleotide sequence ID" value="NC_008570.1"/>
</dbReference>
<dbReference type="SMR" id="A0KQY2"/>
<dbReference type="STRING" id="380703.AHA_4266"/>
<dbReference type="EnsemblBacteria" id="ABK36891">
    <property type="protein sequence ID" value="ABK36891"/>
    <property type="gene ID" value="AHA_4266"/>
</dbReference>
<dbReference type="GeneID" id="4487370"/>
<dbReference type="KEGG" id="aha:AHA_4266"/>
<dbReference type="PATRIC" id="fig|380703.7.peg.4216"/>
<dbReference type="eggNOG" id="COG0711">
    <property type="taxonomic scope" value="Bacteria"/>
</dbReference>
<dbReference type="HOGENOM" id="CLU_079215_4_5_6"/>
<dbReference type="OrthoDB" id="9788020at2"/>
<dbReference type="Proteomes" id="UP000000756">
    <property type="component" value="Chromosome"/>
</dbReference>
<dbReference type="GO" id="GO:0005886">
    <property type="term" value="C:plasma membrane"/>
    <property type="evidence" value="ECO:0007669"/>
    <property type="project" value="UniProtKB-SubCell"/>
</dbReference>
<dbReference type="GO" id="GO:0045259">
    <property type="term" value="C:proton-transporting ATP synthase complex"/>
    <property type="evidence" value="ECO:0007669"/>
    <property type="project" value="UniProtKB-KW"/>
</dbReference>
<dbReference type="GO" id="GO:0046933">
    <property type="term" value="F:proton-transporting ATP synthase activity, rotational mechanism"/>
    <property type="evidence" value="ECO:0007669"/>
    <property type="project" value="UniProtKB-UniRule"/>
</dbReference>
<dbReference type="GO" id="GO:0046961">
    <property type="term" value="F:proton-transporting ATPase activity, rotational mechanism"/>
    <property type="evidence" value="ECO:0007669"/>
    <property type="project" value="TreeGrafter"/>
</dbReference>
<dbReference type="CDD" id="cd06503">
    <property type="entry name" value="ATP-synt_Fo_b"/>
    <property type="match status" value="1"/>
</dbReference>
<dbReference type="FunFam" id="1.20.5.620:FF:000001">
    <property type="entry name" value="ATP synthase subunit b"/>
    <property type="match status" value="1"/>
</dbReference>
<dbReference type="Gene3D" id="6.10.250.1580">
    <property type="match status" value="1"/>
</dbReference>
<dbReference type="HAMAP" id="MF_01398">
    <property type="entry name" value="ATP_synth_b_bprime"/>
    <property type="match status" value="1"/>
</dbReference>
<dbReference type="InterPro" id="IPR028987">
    <property type="entry name" value="ATP_synth_B-like_membr_sf"/>
</dbReference>
<dbReference type="InterPro" id="IPR002146">
    <property type="entry name" value="ATP_synth_b/b'su_bac/chlpt"/>
</dbReference>
<dbReference type="InterPro" id="IPR005864">
    <property type="entry name" value="ATP_synth_F0_bsu_bac"/>
</dbReference>
<dbReference type="InterPro" id="IPR050059">
    <property type="entry name" value="ATP_synthase_B_chain"/>
</dbReference>
<dbReference type="NCBIfam" id="TIGR01144">
    <property type="entry name" value="ATP_synt_b"/>
    <property type="match status" value="1"/>
</dbReference>
<dbReference type="NCBIfam" id="NF004411">
    <property type="entry name" value="PRK05759.1-2"/>
    <property type="match status" value="1"/>
</dbReference>
<dbReference type="NCBIfam" id="NF004413">
    <property type="entry name" value="PRK05759.1-4"/>
    <property type="match status" value="1"/>
</dbReference>
<dbReference type="PANTHER" id="PTHR33445:SF1">
    <property type="entry name" value="ATP SYNTHASE SUBUNIT B"/>
    <property type="match status" value="1"/>
</dbReference>
<dbReference type="PANTHER" id="PTHR33445">
    <property type="entry name" value="ATP SYNTHASE SUBUNIT B', CHLOROPLASTIC"/>
    <property type="match status" value="1"/>
</dbReference>
<dbReference type="Pfam" id="PF00430">
    <property type="entry name" value="ATP-synt_B"/>
    <property type="match status" value="1"/>
</dbReference>
<dbReference type="SUPFAM" id="SSF81573">
    <property type="entry name" value="F1F0 ATP synthase subunit B, membrane domain"/>
    <property type="match status" value="1"/>
</dbReference>
<gene>
    <name evidence="1" type="primary">atpF</name>
    <name type="ordered locus">AHA_4266</name>
</gene>
<protein>
    <recommendedName>
        <fullName evidence="1">ATP synthase subunit b</fullName>
    </recommendedName>
    <alternativeName>
        <fullName evidence="1">ATP synthase F(0) sector subunit b</fullName>
    </alternativeName>
    <alternativeName>
        <fullName evidence="1">ATPase subunit I</fullName>
    </alternativeName>
    <alternativeName>
        <fullName evidence="1">F-type ATPase subunit b</fullName>
        <shortName evidence="1">F-ATPase subunit b</shortName>
    </alternativeName>
</protein>
<evidence type="ECO:0000255" key="1">
    <source>
        <dbReference type="HAMAP-Rule" id="MF_01398"/>
    </source>
</evidence>
<organism>
    <name type="scientific">Aeromonas hydrophila subsp. hydrophila (strain ATCC 7966 / DSM 30187 / BCRC 13018 / CCUG 14551 / JCM 1027 / KCTC 2358 / NCIMB 9240 / NCTC 8049)</name>
    <dbReference type="NCBI Taxonomy" id="380703"/>
    <lineage>
        <taxon>Bacteria</taxon>
        <taxon>Pseudomonadati</taxon>
        <taxon>Pseudomonadota</taxon>
        <taxon>Gammaproteobacteria</taxon>
        <taxon>Aeromonadales</taxon>
        <taxon>Aeromonadaceae</taxon>
        <taxon>Aeromonas</taxon>
    </lineage>
</organism>
<proteinExistence type="inferred from homology"/>
<comment type="function">
    <text evidence="1">F(1)F(0) ATP synthase produces ATP from ADP in the presence of a proton or sodium gradient. F-type ATPases consist of two structural domains, F(1) containing the extramembraneous catalytic core and F(0) containing the membrane proton channel, linked together by a central stalk and a peripheral stalk. During catalysis, ATP synthesis in the catalytic domain of F(1) is coupled via a rotary mechanism of the central stalk subunits to proton translocation.</text>
</comment>
<comment type="function">
    <text evidence="1">Component of the F(0) channel, it forms part of the peripheral stalk, linking F(1) to F(0).</text>
</comment>
<comment type="subunit">
    <text evidence="1">F-type ATPases have 2 components, F(1) - the catalytic core - and F(0) - the membrane proton channel. F(1) has five subunits: alpha(3), beta(3), gamma(1), delta(1), epsilon(1). F(0) has three main subunits: a(1), b(2) and c(10-14). The alpha and beta chains form an alternating ring which encloses part of the gamma chain. F(1) is attached to F(0) by a central stalk formed by the gamma and epsilon chains, while a peripheral stalk is formed by the delta and b chains.</text>
</comment>
<comment type="subcellular location">
    <subcellularLocation>
        <location evidence="1">Cell inner membrane</location>
        <topology evidence="1">Single-pass membrane protein</topology>
    </subcellularLocation>
</comment>
<comment type="similarity">
    <text evidence="1">Belongs to the ATPase B chain family.</text>
</comment>